<evidence type="ECO:0000255" key="1">
    <source>
        <dbReference type="HAMAP-Rule" id="MF_00395"/>
    </source>
</evidence>
<keyword id="KW-0249">Electron transport</keyword>
<keyword id="KW-0472">Membrane</keyword>
<keyword id="KW-0602">Photosynthesis</keyword>
<keyword id="KW-0793">Thylakoid</keyword>
<keyword id="KW-0812">Transmembrane</keyword>
<keyword id="KW-1133">Transmembrane helix</keyword>
<keyword id="KW-0813">Transport</keyword>
<accession>A2C9Y5</accession>
<dbReference type="EMBL" id="CP000554">
    <property type="protein sequence ID" value="ABM78295.1"/>
    <property type="molecule type" value="Genomic_DNA"/>
</dbReference>
<dbReference type="RefSeq" id="WP_011826186.1">
    <property type="nucleotide sequence ID" value="NC_008820.1"/>
</dbReference>
<dbReference type="SMR" id="A2C9Y5"/>
<dbReference type="STRING" id="59922.P9303_15511"/>
<dbReference type="KEGG" id="pmf:P9303_15511"/>
<dbReference type="HOGENOM" id="CLU_215774_0_0_3"/>
<dbReference type="BioCyc" id="PMAR59922:G1G80-1346-MONOMER"/>
<dbReference type="Proteomes" id="UP000002274">
    <property type="component" value="Chromosome"/>
</dbReference>
<dbReference type="GO" id="GO:0009512">
    <property type="term" value="C:cytochrome b6f complex"/>
    <property type="evidence" value="ECO:0007669"/>
    <property type="project" value="InterPro"/>
</dbReference>
<dbReference type="GO" id="GO:0031676">
    <property type="term" value="C:plasma membrane-derived thylakoid membrane"/>
    <property type="evidence" value="ECO:0007669"/>
    <property type="project" value="UniProtKB-SubCell"/>
</dbReference>
<dbReference type="GO" id="GO:0045158">
    <property type="term" value="F:electron transporter, transferring electrons within cytochrome b6/f complex of photosystem II activity"/>
    <property type="evidence" value="ECO:0007669"/>
    <property type="project" value="InterPro"/>
</dbReference>
<dbReference type="GO" id="GO:0017004">
    <property type="term" value="P:cytochrome complex assembly"/>
    <property type="evidence" value="ECO:0007669"/>
    <property type="project" value="UniProtKB-UniRule"/>
</dbReference>
<dbReference type="GO" id="GO:0015979">
    <property type="term" value="P:photosynthesis"/>
    <property type="evidence" value="ECO:0007669"/>
    <property type="project" value="UniProtKB-KW"/>
</dbReference>
<dbReference type="HAMAP" id="MF_00395">
    <property type="entry name" value="Cytb6_f_PetN"/>
    <property type="match status" value="1"/>
</dbReference>
<dbReference type="InterPro" id="IPR036143">
    <property type="entry name" value="Cytochr_b6-f_cplx_su8_sf"/>
</dbReference>
<dbReference type="InterPro" id="IPR005497">
    <property type="entry name" value="Cytochrome_b6-f_cplx_su8"/>
</dbReference>
<dbReference type="NCBIfam" id="NF002709">
    <property type="entry name" value="PRK02529.1"/>
    <property type="match status" value="1"/>
</dbReference>
<dbReference type="Pfam" id="PF03742">
    <property type="entry name" value="PetN"/>
    <property type="match status" value="1"/>
</dbReference>
<dbReference type="SUPFAM" id="SSF103451">
    <property type="entry name" value="PetN subunit of the cytochrome b6f complex"/>
    <property type="match status" value="1"/>
</dbReference>
<sequence length="33" mass="3580">MLFTLAWASLAAVFSFSIAMVVWGRNGDGSLNF</sequence>
<reference key="1">
    <citation type="journal article" date="2007" name="PLoS Genet.">
        <title>Patterns and implications of gene gain and loss in the evolution of Prochlorococcus.</title>
        <authorList>
            <person name="Kettler G.C."/>
            <person name="Martiny A.C."/>
            <person name="Huang K."/>
            <person name="Zucker J."/>
            <person name="Coleman M.L."/>
            <person name="Rodrigue S."/>
            <person name="Chen F."/>
            <person name="Lapidus A."/>
            <person name="Ferriera S."/>
            <person name="Johnson J."/>
            <person name="Steglich C."/>
            <person name="Church G.M."/>
            <person name="Richardson P."/>
            <person name="Chisholm S.W."/>
        </authorList>
    </citation>
    <scope>NUCLEOTIDE SEQUENCE [LARGE SCALE GENOMIC DNA]</scope>
    <source>
        <strain>MIT 9303</strain>
    </source>
</reference>
<organism>
    <name type="scientific">Prochlorococcus marinus (strain MIT 9303)</name>
    <dbReference type="NCBI Taxonomy" id="59922"/>
    <lineage>
        <taxon>Bacteria</taxon>
        <taxon>Bacillati</taxon>
        <taxon>Cyanobacteriota</taxon>
        <taxon>Cyanophyceae</taxon>
        <taxon>Synechococcales</taxon>
        <taxon>Prochlorococcaceae</taxon>
        <taxon>Prochlorococcus</taxon>
    </lineage>
</organism>
<name>PETN_PROM3</name>
<proteinExistence type="inferred from homology"/>
<protein>
    <recommendedName>
        <fullName evidence="1">Cytochrome b6-f complex subunit 8</fullName>
    </recommendedName>
    <alternativeName>
        <fullName evidence="1">Cytochrome b6-f complex subunit PetN</fullName>
    </alternativeName>
    <alternativeName>
        <fullName evidence="1">Cytochrome b6-f complex subunit VIII</fullName>
    </alternativeName>
</protein>
<feature type="chain" id="PRO_1000049575" description="Cytochrome b6-f complex subunit 8">
    <location>
        <begin position="1"/>
        <end position="33"/>
    </location>
</feature>
<feature type="transmembrane region" description="Helical" evidence="1">
    <location>
        <begin position="2"/>
        <end position="22"/>
    </location>
</feature>
<gene>
    <name evidence="1" type="primary">petN</name>
    <name type="ordered locus">P9303_15511</name>
</gene>
<comment type="function">
    <text evidence="1">Component of the cytochrome b6-f complex, which mediates electron transfer between photosystem II (PSII) and photosystem I (PSI), cyclic electron flow around PSI, and state transitions.</text>
</comment>
<comment type="subunit">
    <text evidence="1">The 4 large subunits of the cytochrome b6-f complex are cytochrome b6, subunit IV (17 kDa polypeptide, PetD), cytochrome f and the Rieske protein, while the 4 small subunits are PetG, PetL, PetM and PetN. The complex functions as a dimer.</text>
</comment>
<comment type="subcellular location">
    <subcellularLocation>
        <location evidence="1">Cellular thylakoid membrane</location>
        <topology evidence="1">Single-pass membrane protein</topology>
    </subcellularLocation>
</comment>
<comment type="similarity">
    <text evidence="1">Belongs to the PetN family.</text>
</comment>